<dbReference type="EC" id="6.1.1.11" evidence="1"/>
<dbReference type="EMBL" id="AM933172">
    <property type="protein sequence ID" value="CAR32451.1"/>
    <property type="molecule type" value="Genomic_DNA"/>
</dbReference>
<dbReference type="RefSeq" id="WP_000886697.1">
    <property type="nucleotide sequence ID" value="NC_011294.1"/>
</dbReference>
<dbReference type="SMR" id="B5QYP4"/>
<dbReference type="KEGG" id="set:SEN0868"/>
<dbReference type="HOGENOM" id="CLU_023797_1_1_6"/>
<dbReference type="UniPathway" id="UPA00906">
    <property type="reaction ID" value="UER00895"/>
</dbReference>
<dbReference type="Proteomes" id="UP000000613">
    <property type="component" value="Chromosome"/>
</dbReference>
<dbReference type="GO" id="GO:0005737">
    <property type="term" value="C:cytoplasm"/>
    <property type="evidence" value="ECO:0007669"/>
    <property type="project" value="UniProtKB-SubCell"/>
</dbReference>
<dbReference type="GO" id="GO:0005524">
    <property type="term" value="F:ATP binding"/>
    <property type="evidence" value="ECO:0007669"/>
    <property type="project" value="UniProtKB-UniRule"/>
</dbReference>
<dbReference type="GO" id="GO:0004828">
    <property type="term" value="F:serine-tRNA ligase activity"/>
    <property type="evidence" value="ECO:0007669"/>
    <property type="project" value="UniProtKB-UniRule"/>
</dbReference>
<dbReference type="GO" id="GO:0016260">
    <property type="term" value="P:selenocysteine biosynthetic process"/>
    <property type="evidence" value="ECO:0007669"/>
    <property type="project" value="UniProtKB-UniRule"/>
</dbReference>
<dbReference type="GO" id="GO:0006434">
    <property type="term" value="P:seryl-tRNA aminoacylation"/>
    <property type="evidence" value="ECO:0007669"/>
    <property type="project" value="UniProtKB-UniRule"/>
</dbReference>
<dbReference type="CDD" id="cd00770">
    <property type="entry name" value="SerRS_core"/>
    <property type="match status" value="1"/>
</dbReference>
<dbReference type="FunFam" id="1.10.287.40:FF:000001">
    <property type="entry name" value="Serine--tRNA ligase"/>
    <property type="match status" value="1"/>
</dbReference>
<dbReference type="FunFam" id="3.30.930.10:FF:000018">
    <property type="entry name" value="Serine--tRNA ligase"/>
    <property type="match status" value="1"/>
</dbReference>
<dbReference type="Gene3D" id="3.30.930.10">
    <property type="entry name" value="Bira Bifunctional Protein, Domain 2"/>
    <property type="match status" value="1"/>
</dbReference>
<dbReference type="Gene3D" id="1.10.287.40">
    <property type="entry name" value="Serine-tRNA synthetase, tRNA binding domain"/>
    <property type="match status" value="1"/>
</dbReference>
<dbReference type="HAMAP" id="MF_00176">
    <property type="entry name" value="Ser_tRNA_synth_type1"/>
    <property type="match status" value="1"/>
</dbReference>
<dbReference type="InterPro" id="IPR002314">
    <property type="entry name" value="aa-tRNA-synt_IIb"/>
</dbReference>
<dbReference type="InterPro" id="IPR006195">
    <property type="entry name" value="aa-tRNA-synth_II"/>
</dbReference>
<dbReference type="InterPro" id="IPR045864">
    <property type="entry name" value="aa-tRNA-synth_II/BPL/LPL"/>
</dbReference>
<dbReference type="InterPro" id="IPR002317">
    <property type="entry name" value="Ser-tRNA-ligase_type_1"/>
</dbReference>
<dbReference type="InterPro" id="IPR015866">
    <property type="entry name" value="Ser-tRNA-synth_1_N"/>
</dbReference>
<dbReference type="InterPro" id="IPR042103">
    <property type="entry name" value="SerRS_1_N_sf"/>
</dbReference>
<dbReference type="InterPro" id="IPR033729">
    <property type="entry name" value="SerRS_core"/>
</dbReference>
<dbReference type="InterPro" id="IPR010978">
    <property type="entry name" value="tRNA-bd_arm"/>
</dbReference>
<dbReference type="NCBIfam" id="TIGR00414">
    <property type="entry name" value="serS"/>
    <property type="match status" value="1"/>
</dbReference>
<dbReference type="PANTHER" id="PTHR43697:SF1">
    <property type="entry name" value="SERINE--TRNA LIGASE"/>
    <property type="match status" value="1"/>
</dbReference>
<dbReference type="PANTHER" id="PTHR43697">
    <property type="entry name" value="SERYL-TRNA SYNTHETASE"/>
    <property type="match status" value="1"/>
</dbReference>
<dbReference type="Pfam" id="PF02403">
    <property type="entry name" value="Seryl_tRNA_N"/>
    <property type="match status" value="1"/>
</dbReference>
<dbReference type="Pfam" id="PF00587">
    <property type="entry name" value="tRNA-synt_2b"/>
    <property type="match status" value="1"/>
</dbReference>
<dbReference type="PIRSF" id="PIRSF001529">
    <property type="entry name" value="Ser-tRNA-synth_IIa"/>
    <property type="match status" value="1"/>
</dbReference>
<dbReference type="PRINTS" id="PR00981">
    <property type="entry name" value="TRNASYNTHSER"/>
</dbReference>
<dbReference type="SUPFAM" id="SSF55681">
    <property type="entry name" value="Class II aaRS and biotin synthetases"/>
    <property type="match status" value="1"/>
</dbReference>
<dbReference type="SUPFAM" id="SSF46589">
    <property type="entry name" value="tRNA-binding arm"/>
    <property type="match status" value="1"/>
</dbReference>
<dbReference type="PROSITE" id="PS50862">
    <property type="entry name" value="AA_TRNA_LIGASE_II"/>
    <property type="match status" value="1"/>
</dbReference>
<proteinExistence type="inferred from homology"/>
<organism>
    <name type="scientific">Salmonella enteritidis PT4 (strain P125109)</name>
    <dbReference type="NCBI Taxonomy" id="550537"/>
    <lineage>
        <taxon>Bacteria</taxon>
        <taxon>Pseudomonadati</taxon>
        <taxon>Pseudomonadota</taxon>
        <taxon>Gammaproteobacteria</taxon>
        <taxon>Enterobacterales</taxon>
        <taxon>Enterobacteriaceae</taxon>
        <taxon>Salmonella</taxon>
    </lineage>
</organism>
<sequence>MLDPNLLRNEPDAVAEKLARRGFKLDVDKLRALEERRKVLQVNTENLQAERNSRSKSIGQAKARGEDIEPLRLEVNKLGEELDAAKAELDTLLAEIRDIALTIPNLPADEVPVGKDENDNVEVSRWGTPREFDFEIRDHVTLGEMHSGLDFAAAVKLTGSRFVVMKGQIARMHRALSQFMLDLHTEQHGYSENYVPYLVNHDTLYGTGQLPKFAGDLFHTRPLEEEADSSNYALIPTAEVPLTNLVRDEIIDEDQLPIKMTAHTPCFRSEAGSYGRDTRGLIRMHQFDKVEMVQIVRPEDSMAALEEMTGHAEKVLQLLGLPYRKIILCTGDMGFGACKTYDLEVWVPAQNTYREISSCSNVWDFQARRMQARCRSKSDKKTRLVHTLNGSGLAVGRTLVAVMENYQQADGRIEVPEVLRPYMNGLEYIG</sequence>
<reference key="1">
    <citation type="journal article" date="2008" name="Genome Res.">
        <title>Comparative genome analysis of Salmonella enteritidis PT4 and Salmonella gallinarum 287/91 provides insights into evolutionary and host adaptation pathways.</title>
        <authorList>
            <person name="Thomson N.R."/>
            <person name="Clayton D.J."/>
            <person name="Windhorst D."/>
            <person name="Vernikos G."/>
            <person name="Davidson S."/>
            <person name="Churcher C."/>
            <person name="Quail M.A."/>
            <person name="Stevens M."/>
            <person name="Jones M.A."/>
            <person name="Watson M."/>
            <person name="Barron A."/>
            <person name="Layton A."/>
            <person name="Pickard D."/>
            <person name="Kingsley R.A."/>
            <person name="Bignell A."/>
            <person name="Clark L."/>
            <person name="Harris B."/>
            <person name="Ormond D."/>
            <person name="Abdellah Z."/>
            <person name="Brooks K."/>
            <person name="Cherevach I."/>
            <person name="Chillingworth T."/>
            <person name="Woodward J."/>
            <person name="Norberczak H."/>
            <person name="Lord A."/>
            <person name="Arrowsmith C."/>
            <person name="Jagels K."/>
            <person name="Moule S."/>
            <person name="Mungall K."/>
            <person name="Saunders M."/>
            <person name="Whitehead S."/>
            <person name="Chabalgoity J.A."/>
            <person name="Maskell D."/>
            <person name="Humphreys T."/>
            <person name="Roberts M."/>
            <person name="Barrow P.A."/>
            <person name="Dougan G."/>
            <person name="Parkhill J."/>
        </authorList>
    </citation>
    <scope>NUCLEOTIDE SEQUENCE [LARGE SCALE GENOMIC DNA]</scope>
    <source>
        <strain>P125109</strain>
    </source>
</reference>
<keyword id="KW-0030">Aminoacyl-tRNA synthetase</keyword>
<keyword id="KW-0067">ATP-binding</keyword>
<keyword id="KW-0963">Cytoplasm</keyword>
<keyword id="KW-0436">Ligase</keyword>
<keyword id="KW-0547">Nucleotide-binding</keyword>
<keyword id="KW-0648">Protein biosynthesis</keyword>
<name>SYS_SALEP</name>
<protein>
    <recommendedName>
        <fullName evidence="1">Serine--tRNA ligase</fullName>
        <ecNumber evidence="1">6.1.1.11</ecNumber>
    </recommendedName>
    <alternativeName>
        <fullName evidence="1">Seryl-tRNA synthetase</fullName>
        <shortName evidence="1">SerRS</shortName>
    </alternativeName>
    <alternativeName>
        <fullName evidence="1">Seryl-tRNA(Ser/Sec) synthetase</fullName>
    </alternativeName>
</protein>
<gene>
    <name evidence="1" type="primary">serS</name>
    <name type="ordered locus">SEN0868</name>
</gene>
<feature type="chain" id="PRO_1000098118" description="Serine--tRNA ligase">
    <location>
        <begin position="1"/>
        <end position="430"/>
    </location>
</feature>
<feature type="binding site" evidence="1">
    <location>
        <begin position="237"/>
        <end position="239"/>
    </location>
    <ligand>
        <name>L-serine</name>
        <dbReference type="ChEBI" id="CHEBI:33384"/>
    </ligand>
</feature>
<feature type="binding site" evidence="1">
    <location>
        <begin position="268"/>
        <end position="270"/>
    </location>
    <ligand>
        <name>ATP</name>
        <dbReference type="ChEBI" id="CHEBI:30616"/>
    </ligand>
</feature>
<feature type="binding site" evidence="1">
    <location>
        <position position="291"/>
    </location>
    <ligand>
        <name>L-serine</name>
        <dbReference type="ChEBI" id="CHEBI:33384"/>
    </ligand>
</feature>
<feature type="binding site" evidence="1">
    <location>
        <begin position="355"/>
        <end position="358"/>
    </location>
    <ligand>
        <name>ATP</name>
        <dbReference type="ChEBI" id="CHEBI:30616"/>
    </ligand>
</feature>
<feature type="binding site" evidence="1">
    <location>
        <position position="391"/>
    </location>
    <ligand>
        <name>L-serine</name>
        <dbReference type="ChEBI" id="CHEBI:33384"/>
    </ligand>
</feature>
<evidence type="ECO:0000255" key="1">
    <source>
        <dbReference type="HAMAP-Rule" id="MF_00176"/>
    </source>
</evidence>
<comment type="function">
    <text evidence="1">Catalyzes the attachment of serine to tRNA(Ser). Is also able to aminoacylate tRNA(Sec) with serine, to form the misacylated tRNA L-seryl-tRNA(Sec), which will be further converted into selenocysteinyl-tRNA(Sec).</text>
</comment>
<comment type="catalytic activity">
    <reaction evidence="1">
        <text>tRNA(Ser) + L-serine + ATP = L-seryl-tRNA(Ser) + AMP + diphosphate + H(+)</text>
        <dbReference type="Rhea" id="RHEA:12292"/>
        <dbReference type="Rhea" id="RHEA-COMP:9669"/>
        <dbReference type="Rhea" id="RHEA-COMP:9703"/>
        <dbReference type="ChEBI" id="CHEBI:15378"/>
        <dbReference type="ChEBI" id="CHEBI:30616"/>
        <dbReference type="ChEBI" id="CHEBI:33019"/>
        <dbReference type="ChEBI" id="CHEBI:33384"/>
        <dbReference type="ChEBI" id="CHEBI:78442"/>
        <dbReference type="ChEBI" id="CHEBI:78533"/>
        <dbReference type="ChEBI" id="CHEBI:456215"/>
        <dbReference type="EC" id="6.1.1.11"/>
    </reaction>
</comment>
<comment type="catalytic activity">
    <reaction evidence="1">
        <text>tRNA(Sec) + L-serine + ATP = L-seryl-tRNA(Sec) + AMP + diphosphate + H(+)</text>
        <dbReference type="Rhea" id="RHEA:42580"/>
        <dbReference type="Rhea" id="RHEA-COMP:9742"/>
        <dbReference type="Rhea" id="RHEA-COMP:10128"/>
        <dbReference type="ChEBI" id="CHEBI:15378"/>
        <dbReference type="ChEBI" id="CHEBI:30616"/>
        <dbReference type="ChEBI" id="CHEBI:33019"/>
        <dbReference type="ChEBI" id="CHEBI:33384"/>
        <dbReference type="ChEBI" id="CHEBI:78442"/>
        <dbReference type="ChEBI" id="CHEBI:78533"/>
        <dbReference type="ChEBI" id="CHEBI:456215"/>
        <dbReference type="EC" id="6.1.1.11"/>
    </reaction>
</comment>
<comment type="pathway">
    <text evidence="1">Aminoacyl-tRNA biosynthesis; selenocysteinyl-tRNA(Sec) biosynthesis; L-seryl-tRNA(Sec) from L-serine and tRNA(Sec): step 1/1.</text>
</comment>
<comment type="subunit">
    <text evidence="1">Homodimer. The tRNA molecule binds across the dimer.</text>
</comment>
<comment type="subcellular location">
    <subcellularLocation>
        <location evidence="1">Cytoplasm</location>
    </subcellularLocation>
</comment>
<comment type="domain">
    <text evidence="1">Consists of two distinct domains, a catalytic core and a N-terminal extension that is involved in tRNA binding.</text>
</comment>
<comment type="similarity">
    <text evidence="1">Belongs to the class-II aminoacyl-tRNA synthetase family. Type-1 seryl-tRNA synthetase subfamily.</text>
</comment>
<accession>B5QYP4</accession>